<keyword id="KW-0963">Cytoplasm</keyword>
<keyword id="KW-0418">Kinase</keyword>
<keyword id="KW-0597">Phosphoprotein</keyword>
<keyword id="KW-0598">Phosphotransferase system</keyword>
<keyword id="KW-0762">Sugar transport</keyword>
<keyword id="KW-0808">Transferase</keyword>
<keyword id="KW-0813">Transport</keyword>
<organism>
    <name type="scientific">Staphylococcus aureus (strain Mu50 / ATCC 700699)</name>
    <dbReference type="NCBI Taxonomy" id="158878"/>
    <lineage>
        <taxon>Bacteria</taxon>
        <taxon>Bacillati</taxon>
        <taxon>Bacillota</taxon>
        <taxon>Bacilli</taxon>
        <taxon>Bacillales</taxon>
        <taxon>Staphylococcaceae</taxon>
        <taxon>Staphylococcus</taxon>
    </lineage>
</organism>
<reference key="1">
    <citation type="journal article" date="2001" name="Lancet">
        <title>Whole genome sequencing of meticillin-resistant Staphylococcus aureus.</title>
        <authorList>
            <person name="Kuroda M."/>
            <person name="Ohta T."/>
            <person name="Uchiyama I."/>
            <person name="Baba T."/>
            <person name="Yuzawa H."/>
            <person name="Kobayashi I."/>
            <person name="Cui L."/>
            <person name="Oguchi A."/>
            <person name="Aoki K."/>
            <person name="Nagai Y."/>
            <person name="Lian J.-Q."/>
            <person name="Ito T."/>
            <person name="Kanamori M."/>
            <person name="Matsumaru H."/>
            <person name="Maruyama A."/>
            <person name="Murakami H."/>
            <person name="Hosoyama A."/>
            <person name="Mizutani-Ui Y."/>
            <person name="Takahashi N.K."/>
            <person name="Sawano T."/>
            <person name="Inoue R."/>
            <person name="Kaito C."/>
            <person name="Sekimizu K."/>
            <person name="Hirakawa H."/>
            <person name="Kuhara S."/>
            <person name="Goto S."/>
            <person name="Yabuzaki J."/>
            <person name="Kanehisa M."/>
            <person name="Yamashita A."/>
            <person name="Oshima K."/>
            <person name="Furuya K."/>
            <person name="Yoshino C."/>
            <person name="Shiba T."/>
            <person name="Hattori M."/>
            <person name="Ogasawara N."/>
            <person name="Hayashi H."/>
            <person name="Hiramatsu K."/>
        </authorList>
    </citation>
    <scope>NUCLEOTIDE SEQUENCE [LARGE SCALE GENOMIC DNA]</scope>
    <source>
        <strain>Mu50 / ATCC 700699</strain>
    </source>
</reference>
<evidence type="ECO:0000250" key="1"/>
<evidence type="ECO:0000250" key="2">
    <source>
        <dbReference type="UniProtKB" id="P00550"/>
    </source>
</evidence>
<evidence type="ECO:0000250" key="3">
    <source>
        <dbReference type="UniProtKB" id="P0A0E0"/>
    </source>
</evidence>
<evidence type="ECO:0000255" key="4">
    <source>
        <dbReference type="PROSITE-ProRule" id="PRU00417"/>
    </source>
</evidence>
<evidence type="ECO:0000305" key="5"/>
<accession>P0A0D7</accession>
<accession>P17875</accession>
<accession>Q9RL67</accession>
<protein>
    <recommendedName>
        <fullName evidence="3">Mannitol-specific phosphotransferase enzyme IIA component</fullName>
    </recommendedName>
    <alternativeName>
        <fullName evidence="3">EIIA</fullName>
    </alternativeName>
    <alternativeName>
        <fullName evidence="3">EIII</fullName>
    </alternativeName>
    <alternativeName>
        <fullName evidence="3">PTS system mannitol-specific EIIA component</fullName>
    </alternativeName>
</protein>
<dbReference type="EMBL" id="BA000017">
    <property type="protein sequence ID" value="BAB58320.1"/>
    <property type="molecule type" value="Genomic_DNA"/>
</dbReference>
<dbReference type="RefSeq" id="WP_001292149.1">
    <property type="nucleotide sequence ID" value="NC_002758.2"/>
</dbReference>
<dbReference type="SMR" id="P0A0D7"/>
<dbReference type="KEGG" id="sav:SAV2158"/>
<dbReference type="HOGENOM" id="CLU_072531_3_0_9"/>
<dbReference type="PhylomeDB" id="P0A0D7"/>
<dbReference type="Proteomes" id="UP000002481">
    <property type="component" value="Chromosome"/>
</dbReference>
<dbReference type="GO" id="GO:0005737">
    <property type="term" value="C:cytoplasm"/>
    <property type="evidence" value="ECO:0007669"/>
    <property type="project" value="UniProtKB-SubCell"/>
</dbReference>
<dbReference type="GO" id="GO:0005886">
    <property type="term" value="C:plasma membrane"/>
    <property type="evidence" value="ECO:0007669"/>
    <property type="project" value="TreeGrafter"/>
</dbReference>
<dbReference type="GO" id="GO:0016301">
    <property type="term" value="F:kinase activity"/>
    <property type="evidence" value="ECO:0007669"/>
    <property type="project" value="UniProtKB-KW"/>
</dbReference>
<dbReference type="GO" id="GO:0090563">
    <property type="term" value="F:protein-phosphocysteine-sugar phosphotransferase activity"/>
    <property type="evidence" value="ECO:0007669"/>
    <property type="project" value="TreeGrafter"/>
</dbReference>
<dbReference type="GO" id="GO:0009401">
    <property type="term" value="P:phosphoenolpyruvate-dependent sugar phosphotransferase system"/>
    <property type="evidence" value="ECO:0007669"/>
    <property type="project" value="UniProtKB-KW"/>
</dbReference>
<dbReference type="CDD" id="cd00211">
    <property type="entry name" value="PTS_IIA_fru"/>
    <property type="match status" value="1"/>
</dbReference>
<dbReference type="Gene3D" id="3.40.930.10">
    <property type="entry name" value="Mannitol-specific EII, Chain A"/>
    <property type="match status" value="1"/>
</dbReference>
<dbReference type="InterPro" id="IPR016152">
    <property type="entry name" value="PTrfase/Anion_transptr"/>
</dbReference>
<dbReference type="InterPro" id="IPR002178">
    <property type="entry name" value="PTS_EIIA_type-2_dom"/>
</dbReference>
<dbReference type="InterPro" id="IPR050893">
    <property type="entry name" value="Sugar_PTS"/>
</dbReference>
<dbReference type="PANTHER" id="PTHR30181">
    <property type="entry name" value="MANNITOL PERMEASE IIC COMPONENT"/>
    <property type="match status" value="1"/>
</dbReference>
<dbReference type="PANTHER" id="PTHR30181:SF2">
    <property type="entry name" value="PTS SYSTEM MANNITOL-SPECIFIC EIICBA COMPONENT"/>
    <property type="match status" value="1"/>
</dbReference>
<dbReference type="Pfam" id="PF00359">
    <property type="entry name" value="PTS_EIIA_2"/>
    <property type="match status" value="1"/>
</dbReference>
<dbReference type="SUPFAM" id="SSF55804">
    <property type="entry name" value="Phoshotransferase/anion transport protein"/>
    <property type="match status" value="1"/>
</dbReference>
<dbReference type="PROSITE" id="PS51094">
    <property type="entry name" value="PTS_EIIA_TYPE_2"/>
    <property type="match status" value="1"/>
</dbReference>
<dbReference type="PROSITE" id="PS00372">
    <property type="entry name" value="PTS_EIIA_TYPE_2_HIS"/>
    <property type="match status" value="1"/>
</dbReference>
<gene>
    <name type="primary">mtlF</name>
    <name type="synonym">mtlA</name>
    <name type="ordered locus">SAV2158</name>
</gene>
<feature type="initiator methionine" description="Removed" evidence="1">
    <location>
        <position position="1"/>
    </location>
</feature>
<feature type="chain" id="PRO_0000186637" description="Mannitol-specific phosphotransferase enzyme IIA component">
    <location>
        <begin position="2"/>
        <end position="144"/>
    </location>
</feature>
<feature type="domain" description="PTS EIIA type-2" evidence="4">
    <location>
        <begin position="3"/>
        <end position="142"/>
    </location>
</feature>
<feature type="active site" description="Tele-phosphohistidine intermediate" evidence="3 4">
    <location>
        <position position="63"/>
    </location>
</feature>
<feature type="modified residue" description="Phosphohistidine; by HPr" evidence="2 3">
    <location>
        <position position="63"/>
    </location>
</feature>
<comment type="function">
    <text evidence="3">The phosphoenolpyruvate-dependent sugar phosphotransferase system (sugar PTS), a major carbohydrate active transport system, catalyzes the phosphorylation of incoming sugar substrates concomitantly with their translocation across the cell membrane. The enzyme II CmtAB PTS system is involved in D-mannitol transport.</text>
</comment>
<comment type="subunit">
    <text evidence="3">Homodimer or homotrimer. Seems to be a monomer when not phosphorylated.</text>
</comment>
<comment type="subcellular location">
    <subcellularLocation>
        <location evidence="5">Cytoplasm</location>
    </subcellularLocation>
</comment>
<comment type="domain">
    <text evidence="4">The PTS EIIA type-2 domain is phosphorylated by phospho-HPr on a histidyl residue. Then, it transfers the phosphoryl group to the PTS EIIB type-2 domain.</text>
</comment>
<proteinExistence type="inferred from homology"/>
<name>PTMA_STAAM</name>
<sequence length="144" mass="15542">MSELFSNDNIFLNVNVNSQNEAIEKAGKALVDSGAVTDAYIQAMKDREQVVSTFMGNGLAIPHGTDEAKTNVIHSGLTLLQIPEGVDWDGEVVKVVVGIAGKDGEHLDLLSKIAITFSEEENVDRIVQAKSAEEIKQVFEEADA</sequence>